<comment type="function">
    <text evidence="1">Required for the proper function of SLD3 at the initiation of DNA replication. Binds to SLD3 and reduces its affinity for CDC45, a component of the replication fork. Required for mitochondrial morphology (By similarity).</text>
</comment>
<comment type="subunit">
    <text evidence="1">Interacts with SLD3.</text>
</comment>
<comment type="subcellular location">
    <subcellularLocation>
        <location evidence="1">Nucleus</location>
    </subcellularLocation>
    <subcellularLocation>
        <location evidence="1">Cytoplasm</location>
        <location evidence="1">Cytoskeleton</location>
        <location evidence="1">Spindle pole</location>
    </subcellularLocation>
</comment>
<comment type="similarity">
    <text evidence="2">Belongs to the SLD7 family.</text>
</comment>
<feature type="chain" id="PRO_0000411031" description="Mitochondrial morphogenesis protein SLD7">
    <location>
        <begin position="1"/>
        <end position="257"/>
    </location>
</feature>
<evidence type="ECO:0000250" key="1"/>
<evidence type="ECO:0000305" key="2"/>
<sequence length="257" mass="29510">MSRKLCTLNFTLSGKQGSLVIRDIQLWSNRPTASKSTSELRGQFIQYVDLAKLPLWVRSTNMNTYRCYSTSATAQAYFKSKLRNANRGIVIELSDKVDQRSQEPAYLIIFRENTELNCFQVDLTMKHEFDGQVTKLKQEIGKTRASVSKEGSIDIIIQQSQQRKIGTKTKVYRNVHINDKRLQFNETLSKLILGGLRLRGISNSITDYQKLYKITFDAAEFTHRDELKRISMGSGEEVSFESLQETVETLLKLFTKS</sequence>
<proteinExistence type="inferred from homology"/>
<keyword id="KW-0131">Cell cycle</keyword>
<keyword id="KW-0963">Cytoplasm</keyword>
<keyword id="KW-0206">Cytoskeleton</keyword>
<keyword id="KW-0235">DNA replication</keyword>
<keyword id="KW-0539">Nucleus</keyword>
<reference key="1">
    <citation type="journal article" date="2008" name="FEMS Yeast Res.">
        <title>Comparative genome analysis of a Saccharomyces cerevisiae wine strain.</title>
        <authorList>
            <person name="Borneman A.R."/>
            <person name="Forgan A.H."/>
            <person name="Pretorius I.S."/>
            <person name="Chambers P.J."/>
        </authorList>
    </citation>
    <scope>NUCLEOTIDE SEQUENCE [LARGE SCALE GENOMIC DNA]</scope>
    <source>
        <strain>AWRI1631</strain>
    </source>
</reference>
<gene>
    <name type="primary">SLD7</name>
    <name type="ORF">AWRI1631_152200</name>
</gene>
<organism>
    <name type="scientific">Saccharomyces cerevisiae (strain AWRI1631)</name>
    <name type="common">Baker's yeast</name>
    <dbReference type="NCBI Taxonomy" id="545124"/>
    <lineage>
        <taxon>Eukaryota</taxon>
        <taxon>Fungi</taxon>
        <taxon>Dikarya</taxon>
        <taxon>Ascomycota</taxon>
        <taxon>Saccharomycotina</taxon>
        <taxon>Saccharomycetes</taxon>
        <taxon>Saccharomycetales</taxon>
        <taxon>Saccharomycetaceae</taxon>
        <taxon>Saccharomyces</taxon>
    </lineage>
</organism>
<dbReference type="EMBL" id="ABSV01002141">
    <property type="protein sequence ID" value="EDZ69334.1"/>
    <property type="molecule type" value="Genomic_DNA"/>
</dbReference>
<dbReference type="SMR" id="B5VRV8"/>
<dbReference type="Proteomes" id="UP000008988">
    <property type="component" value="Unassembled WGS sequence"/>
</dbReference>
<dbReference type="GO" id="GO:0005737">
    <property type="term" value="C:cytoplasm"/>
    <property type="evidence" value="ECO:0007669"/>
    <property type="project" value="UniProtKB-KW"/>
</dbReference>
<dbReference type="GO" id="GO:0005634">
    <property type="term" value="C:nucleus"/>
    <property type="evidence" value="ECO:0007669"/>
    <property type="project" value="UniProtKB-SubCell"/>
</dbReference>
<dbReference type="GO" id="GO:0000922">
    <property type="term" value="C:spindle pole"/>
    <property type="evidence" value="ECO:0007669"/>
    <property type="project" value="UniProtKB-SubCell"/>
</dbReference>
<dbReference type="GO" id="GO:0006260">
    <property type="term" value="P:DNA replication"/>
    <property type="evidence" value="ECO:0007669"/>
    <property type="project" value="UniProtKB-KW"/>
</dbReference>
<dbReference type="GO" id="GO:0030174">
    <property type="term" value="P:regulation of DNA-templated DNA replication initiation"/>
    <property type="evidence" value="ECO:0007669"/>
    <property type="project" value="InterPro"/>
</dbReference>
<dbReference type="InterPro" id="IPR016808">
    <property type="entry name" value="Sld7"/>
</dbReference>
<dbReference type="InterPro" id="IPR041260">
    <property type="entry name" value="Sld7_C"/>
</dbReference>
<dbReference type="InterPro" id="IPR041564">
    <property type="entry name" value="Sld7_N"/>
</dbReference>
<dbReference type="Pfam" id="PF18596">
    <property type="entry name" value="Sld7_C"/>
    <property type="match status" value="1"/>
</dbReference>
<dbReference type="Pfam" id="PF18636">
    <property type="entry name" value="Sld7_N"/>
    <property type="match status" value="1"/>
</dbReference>
<dbReference type="PIRSF" id="PIRSF022788">
    <property type="entry name" value="UCP022788"/>
    <property type="match status" value="1"/>
</dbReference>
<accession>B5VRV8</accession>
<protein>
    <recommendedName>
        <fullName>Mitochondrial morphogenesis protein SLD7</fullName>
    </recommendedName>
    <alternativeName>
        <fullName>Synthetic lethality with DPB11-24 mutation protein 7</fullName>
    </alternativeName>
</protein>
<name>SLD7_YEAS6</name>